<gene>
    <name evidence="7" type="primary">clec-88</name>
    <name evidence="6" type="synonym">cpg-6</name>
    <name type="ORF">K10B2.3</name>
</gene>
<protein>
    <recommendedName>
        <fullName>C-type lectin domain-containing protein 88</fullName>
    </recommendedName>
    <alternativeName>
        <fullName>Chondroitin proteoglycan 6</fullName>
    </alternativeName>
</protein>
<proteinExistence type="evidence at protein level"/>
<dbReference type="EMBL" id="DQ340628">
    <property type="protein sequence ID" value="ABC65816.1"/>
    <property type="molecule type" value="mRNA"/>
</dbReference>
<dbReference type="EMBL" id="FO080748">
    <property type="protein sequence ID" value="CCD66394.1"/>
    <property type="molecule type" value="Genomic_DNA"/>
</dbReference>
<dbReference type="RefSeq" id="NP_495283.2">
    <property type="nucleotide sequence ID" value="NM_062882.7"/>
</dbReference>
<dbReference type="SMR" id="Q86NG3"/>
<dbReference type="BioGRID" id="39396">
    <property type="interactions" value="2"/>
</dbReference>
<dbReference type="FunCoup" id="Q86NG3">
    <property type="interactions" value="53"/>
</dbReference>
<dbReference type="STRING" id="6239.K10B2.3b.2"/>
<dbReference type="GlyCosmos" id="Q86NG3">
    <property type="glycosylation" value="2 sites, No reported glycans"/>
</dbReference>
<dbReference type="iPTMnet" id="Q86NG3"/>
<dbReference type="PaxDb" id="6239-K10B2.3b"/>
<dbReference type="PeptideAtlas" id="Q86NG3"/>
<dbReference type="EnsemblMetazoa" id="K10B2.3a.1">
    <property type="protein sequence ID" value="K10B2.3a.1"/>
    <property type="gene ID" value="WBGene00019606"/>
</dbReference>
<dbReference type="GeneID" id="174056"/>
<dbReference type="KEGG" id="cel:CELE_K10B2.3"/>
<dbReference type="UCSC" id="K10B2.3a.1">
    <property type="organism name" value="c. elegans"/>
</dbReference>
<dbReference type="AGR" id="WB:WBGene00019606"/>
<dbReference type="CTD" id="174056"/>
<dbReference type="WormBase" id="K10B2.3a">
    <property type="protein sequence ID" value="CE33419"/>
    <property type="gene ID" value="WBGene00019606"/>
    <property type="gene designation" value="clec-88"/>
</dbReference>
<dbReference type="eggNOG" id="KOG4297">
    <property type="taxonomic scope" value="Eukaryota"/>
</dbReference>
<dbReference type="GeneTree" id="ENSGT00970000196041"/>
<dbReference type="HOGENOM" id="CLU_093598_0_0_1"/>
<dbReference type="InParanoid" id="Q86NG3"/>
<dbReference type="OrthoDB" id="6133475at2759"/>
<dbReference type="Reactome" id="R-CEL-1236978">
    <property type="pathway name" value="Cross-presentation of soluble exogenous antigens (endosomes)"/>
</dbReference>
<dbReference type="Reactome" id="R-CEL-446203">
    <property type="pathway name" value="Asparagine N-linked glycosylation"/>
</dbReference>
<dbReference type="Reactome" id="R-CEL-5621480">
    <property type="pathway name" value="Dectin-2 family"/>
</dbReference>
<dbReference type="Reactome" id="R-CEL-6798695">
    <property type="pathway name" value="Neutrophil degranulation"/>
</dbReference>
<dbReference type="PRO" id="PR:Q86NG3"/>
<dbReference type="Proteomes" id="UP000001940">
    <property type="component" value="Chromosome II"/>
</dbReference>
<dbReference type="Bgee" id="WBGene00019606">
    <property type="expression patterns" value="Expressed in germ line (C elegans) and 4 other cell types or tissues"/>
</dbReference>
<dbReference type="ExpressionAtlas" id="Q86NG3">
    <property type="expression patterns" value="baseline and differential"/>
</dbReference>
<dbReference type="GO" id="GO:0009897">
    <property type="term" value="C:external side of plasma membrane"/>
    <property type="evidence" value="ECO:0000318"/>
    <property type="project" value="GO_Central"/>
</dbReference>
<dbReference type="GO" id="GO:0030246">
    <property type="term" value="F:carbohydrate binding"/>
    <property type="evidence" value="ECO:0000318"/>
    <property type="project" value="GO_Central"/>
</dbReference>
<dbReference type="GO" id="GO:0038187">
    <property type="term" value="F:pattern recognition receptor activity"/>
    <property type="evidence" value="ECO:0000318"/>
    <property type="project" value="GO_Central"/>
</dbReference>
<dbReference type="GO" id="GO:0006955">
    <property type="term" value="P:immune response"/>
    <property type="evidence" value="ECO:0000318"/>
    <property type="project" value="GO_Central"/>
</dbReference>
<dbReference type="Gene3D" id="3.10.100.10">
    <property type="entry name" value="Mannose-Binding Protein A, subunit A"/>
    <property type="match status" value="1"/>
</dbReference>
<dbReference type="InterPro" id="IPR001304">
    <property type="entry name" value="C-type_lectin-like"/>
</dbReference>
<dbReference type="InterPro" id="IPR016186">
    <property type="entry name" value="C-type_lectin-like/link_sf"/>
</dbReference>
<dbReference type="InterPro" id="IPR051379">
    <property type="entry name" value="C-type_Lectin_Receptor_IMM"/>
</dbReference>
<dbReference type="InterPro" id="IPR016187">
    <property type="entry name" value="CTDL_fold"/>
</dbReference>
<dbReference type="PANTHER" id="PTHR46746:SF9">
    <property type="entry name" value="CD209 ANTIGEN-LIKE PROTEIN C-LIKE"/>
    <property type="match status" value="1"/>
</dbReference>
<dbReference type="PANTHER" id="PTHR46746">
    <property type="entry name" value="KILLER CELL LECTIN-LIKE RECEPTOR SUBFAMILY F MEMBER 2"/>
    <property type="match status" value="1"/>
</dbReference>
<dbReference type="Pfam" id="PF00059">
    <property type="entry name" value="Lectin_C"/>
    <property type="match status" value="1"/>
</dbReference>
<dbReference type="SMART" id="SM00034">
    <property type="entry name" value="CLECT"/>
    <property type="match status" value="1"/>
</dbReference>
<dbReference type="SUPFAM" id="SSF56436">
    <property type="entry name" value="C-type lectin-like"/>
    <property type="match status" value="1"/>
</dbReference>
<dbReference type="PROSITE" id="PS50041">
    <property type="entry name" value="C_TYPE_LECTIN_2"/>
    <property type="match status" value="1"/>
</dbReference>
<feature type="signal peptide" evidence="1">
    <location>
        <begin position="1"/>
        <end position="18"/>
    </location>
</feature>
<feature type="chain" id="PRO_0000320339" description="C-type lectin domain-containing protein 88" evidence="1">
    <location>
        <begin position="19"/>
        <end position="228"/>
    </location>
</feature>
<feature type="domain" description="C-type lectin" evidence="2">
    <location>
        <begin position="88"/>
        <end position="218"/>
    </location>
</feature>
<feature type="glycosylation site" description="O-linked (Xyl...) (chondroitin sulfate) serine" evidence="3">
    <location>
        <position position="27"/>
    </location>
</feature>
<feature type="glycosylation site" description="N-linked (GlcNAc...) asparagine" evidence="4">
    <location>
        <position position="220"/>
    </location>
</feature>
<feature type="disulfide bond" evidence="2">
    <location>
        <begin position="109"/>
        <end position="217"/>
    </location>
</feature>
<feature type="disulfide bond" evidence="2">
    <location>
        <begin position="188"/>
        <end position="209"/>
    </location>
</feature>
<reference evidence="5 6" key="1">
    <citation type="journal article" date="2006" name="J. Cell Biol.">
        <title>Identification of novel chondroitin proteoglycans in Caenorhabditis elegans: embryonic cell division depends on CPG-1 and CPG-2.</title>
        <authorList>
            <person name="Olson S.K."/>
            <person name="Bishop J.R."/>
            <person name="Yates J.R."/>
            <person name="Oegema K."/>
            <person name="Esko J.D."/>
        </authorList>
    </citation>
    <scope>NUCLEOTIDE SEQUENCE [MRNA]</scope>
    <scope>IDENTIFICATION BY MASS SPECTROMETRY</scope>
    <scope>GLYCOSYLATION AT SER-27</scope>
</reference>
<reference key="2">
    <citation type="journal article" date="1998" name="Science">
        <title>Genome sequence of the nematode C. elegans: a platform for investigating biology.</title>
        <authorList>
            <consortium name="The C. elegans sequencing consortium"/>
        </authorList>
    </citation>
    <scope>NUCLEOTIDE SEQUENCE [LARGE SCALE GENOMIC DNA]</scope>
    <source>
        <strain>Bristol N2</strain>
    </source>
</reference>
<reference key="3">
    <citation type="journal article" date="2007" name="Mol. Cell. Proteomics">
        <title>Proteomics reveals N-linked glycoprotein diversity in Caenorhabditis elegans and suggests an atypical translocation mechanism for integral membrane proteins.</title>
        <authorList>
            <person name="Kaji H."/>
            <person name="Kamiie J."/>
            <person name="Kawakami H."/>
            <person name="Kido K."/>
            <person name="Yamauchi Y."/>
            <person name="Shinkawa T."/>
            <person name="Taoka M."/>
            <person name="Takahashi N."/>
            <person name="Isobe T."/>
        </authorList>
    </citation>
    <scope>GLYCOSYLATION [LARGE SCALE ANALYSIS] AT ASN-220</scope>
    <scope>IDENTIFICATION BY MASS SPECTROMETRY</scope>
    <source>
        <strain>Bristol N2</strain>
    </source>
</reference>
<evidence type="ECO:0000255" key="1"/>
<evidence type="ECO:0000255" key="2">
    <source>
        <dbReference type="PROSITE-ProRule" id="PRU00040"/>
    </source>
</evidence>
<evidence type="ECO:0000269" key="3">
    <source>
    </source>
</evidence>
<evidence type="ECO:0000269" key="4">
    <source>
    </source>
</evidence>
<evidence type="ECO:0000305" key="5"/>
<evidence type="ECO:0000312" key="6">
    <source>
        <dbReference type="EMBL" id="ABC65816.1"/>
    </source>
</evidence>
<evidence type="ECO:0000312" key="7">
    <source>
        <dbReference type="WormBase" id="K10B2.3a"/>
    </source>
</evidence>
<sequence>MQFIFFGTLFSGLLLVCAVTNDIEDASGETPGIVSQITEEQPHQRQKLYNWDYKDLGTIAFEDIPFPTLQPSQTIDQSENCPEGWIRYSDSCYWVETELLGFAKAERKCSEKQSTLFVANSIDEWEAIRGHSKDSFSSWIGLVRFSHYERSEQLPRWQTEGAVNPSKINWLIKPYSPLVNGWSQLANCAASYKSPASLETASYTYFYPCTYLFYSICERNSTIANSLH</sequence>
<organism>
    <name type="scientific">Caenorhabditis elegans</name>
    <dbReference type="NCBI Taxonomy" id="6239"/>
    <lineage>
        <taxon>Eukaryota</taxon>
        <taxon>Metazoa</taxon>
        <taxon>Ecdysozoa</taxon>
        <taxon>Nematoda</taxon>
        <taxon>Chromadorea</taxon>
        <taxon>Rhabditida</taxon>
        <taxon>Rhabditina</taxon>
        <taxon>Rhabditomorpha</taxon>
        <taxon>Rhabditoidea</taxon>
        <taxon>Rhabditidae</taxon>
        <taxon>Peloderinae</taxon>
        <taxon>Caenorhabditis</taxon>
    </lineage>
</organism>
<name>CLC88_CAEEL</name>
<keyword id="KW-1015">Disulfide bond</keyword>
<keyword id="KW-0325">Glycoprotein</keyword>
<keyword id="KW-0430">Lectin</keyword>
<keyword id="KW-0654">Proteoglycan</keyword>
<keyword id="KW-1185">Reference proteome</keyword>
<keyword id="KW-0732">Signal</keyword>
<accession>Q86NG3</accession>